<organism>
    <name type="scientific">Rattus norvegicus</name>
    <name type="common">Rat</name>
    <dbReference type="NCBI Taxonomy" id="10116"/>
    <lineage>
        <taxon>Eukaryota</taxon>
        <taxon>Metazoa</taxon>
        <taxon>Chordata</taxon>
        <taxon>Craniata</taxon>
        <taxon>Vertebrata</taxon>
        <taxon>Euteleostomi</taxon>
        <taxon>Mammalia</taxon>
        <taxon>Eutheria</taxon>
        <taxon>Euarchontoglires</taxon>
        <taxon>Glires</taxon>
        <taxon>Rodentia</taxon>
        <taxon>Myomorpha</taxon>
        <taxon>Muroidea</taxon>
        <taxon>Muridae</taxon>
        <taxon>Murinae</taxon>
        <taxon>Rattus</taxon>
    </lineage>
</organism>
<keyword id="KW-0002">3D-structure</keyword>
<keyword id="KW-0007">Acetylation</keyword>
<keyword id="KW-0175">Coiled coil</keyword>
<keyword id="KW-0963">Cytoplasm</keyword>
<keyword id="KW-0206">Cytoskeleton</keyword>
<keyword id="KW-0903">Direct protein sequencing</keyword>
<keyword id="KW-1015">Disulfide bond</keyword>
<keyword id="KW-0325">Glycoprotein</keyword>
<keyword id="KW-0509">mRNA transport</keyword>
<keyword id="KW-0906">Nuclear pore complex</keyword>
<keyword id="KW-0539">Nucleus</keyword>
<keyword id="KW-0597">Phosphoprotein</keyword>
<keyword id="KW-0653">Protein transport</keyword>
<keyword id="KW-1185">Reference proteome</keyword>
<keyword id="KW-0677">Repeat</keyword>
<keyword id="KW-0811">Translocation</keyword>
<keyword id="KW-0813">Transport</keyword>
<proteinExistence type="evidence at protein level"/>
<protein>
    <recommendedName>
        <fullName>Nuclear pore glycoprotein p62</fullName>
    </recommendedName>
    <alternativeName>
        <fullName>62 kDa nucleoporin</fullName>
    </alternativeName>
    <alternativeName>
        <fullName>Nucleoporin Nup62</fullName>
    </alternativeName>
</protein>
<comment type="function">
    <text evidence="2 5 7">Essential component of the nuclear pore complex (PubMed:2190987, PubMed:8707840). The N-terminal is probably involved in nucleocytoplasmic transport (By similarity). The C-terminal is involved in protein-protein interaction probably via coiled-coil formation, promotes its association with centrosomes and may function in anchorage of p62 to the pore complex (By similarity). Plays a role in mitotic cell cycle progression by regulating centrosome segregation, centriole maturation and spindle orientation (By similarity). It might be involved in protein recruitment to the centrosome after nuclear breakdown (By similarity).</text>
</comment>
<comment type="subunit">
    <text evidence="2 7">Component of the p62 complex, a complex at least composed of NUP62, NUP54, and NUP58 (PubMed:8707840). Interacts with NUP88 (By similarity). Interacts with NUTF2 (PubMed:8707840). Interacts with HIKESHI (By similarity). Interacts with OSBPL8 (By similarity). Interacts with CAPG (By similarity). Interacts with SAS6 and TUBG1 at the centrosome (By similarity). Interacts with MCM3AP (By similarity).</text>
</comment>
<comment type="subcellular location">
    <subcellularLocation>
        <location evidence="7">Nucleus</location>
        <location evidence="7">Nuclear pore complex</location>
    </subcellularLocation>
    <subcellularLocation>
        <location evidence="2">Cytoplasm</location>
        <location evidence="2">Cytoskeleton</location>
        <location evidence="2">Spindle pole</location>
    </subcellularLocation>
    <subcellularLocation>
        <location evidence="5">Nucleus envelope</location>
    </subcellularLocation>
    <subcellularLocation>
        <location evidence="2">Cytoplasm</location>
        <location evidence="2">Cytoskeleton</location>
        <location evidence="2">Microtubule organizing center</location>
        <location evidence="2">Centrosome</location>
    </subcellularLocation>
    <text evidence="2">Central region of the nuclear pore, within the transporter. During mitotic cell division, it associates with the poles of the mitotic spindle.</text>
</comment>
<comment type="domain">
    <text>Contains FG repeats.</text>
</comment>
<comment type="PTM">
    <text evidence="1">The inner channel of the NPC has a different redox environment from the cytoplasm and allows the formation of interchain disulfide bonds between some nucleoporins, the significant increase of these linkages upon oxidative stress reduces the permeability of the NPC.</text>
</comment>
<comment type="similarity">
    <text evidence="8">Belongs to the nucleoporin NSP1/NUP62 family.</text>
</comment>
<sequence length="525" mass="53397">MSGFNFGGTGAPAGGFTFGTAKTATTTPATGFSFSASGTGTGGFNFGTPSQPAATTPSTSLFSLATQTSTTQTPGFNFGTTPASGGTGFSLGISTPKLSLSSTAATPATANTGSFGLGSSTLTNAISGASTSSQGTAPTGFVFGSSTTSAPSTGTTGFSFTSGSASQPGASGFNIGSVGSLAQPTALSGSPFTPATLATTTAGATQPAAATPTAATTSAGSTLFASIAAAPASSSTTVLSLSAPATTAATPTAGTLGFSLKAPGAAPGASTTSTTTTTTTTTTTASTSSSTTTTGFALSLKPLVPAGPSSVAATALPASSTAVGTTTGPAMTYAQLESLINKWSLELEDQERHFLQQATQVNAWDRTLIENGEKITSLHREVEKVKLDQKRLDQELDFILSQQKELEDLLSPLEESVKEQSGTIYLQHADEEREKTYKLAENIDAQLKRMAQDLKDIIEHLNMAGGPADTSDPLQQICKILNAHMDSLQWVDQSSALLQRRVEEASRVCESRRKEQERSLRIAFD</sequence>
<feature type="initiator methionine" description="Removed" evidence="2">
    <location>
        <position position="1"/>
    </location>
</feature>
<feature type="chain" id="PRO_0000204882" description="Nuclear pore glycoprotein p62">
    <location>
        <begin position="2"/>
        <end position="525"/>
    </location>
</feature>
<feature type="repeat" description="1" evidence="2">
    <location>
        <begin position="6"/>
        <end position="7"/>
    </location>
</feature>
<feature type="repeat" description="2" evidence="2">
    <location>
        <begin position="46"/>
        <end position="47"/>
    </location>
</feature>
<feature type="repeat" description="3" evidence="2">
    <location>
        <begin position="78"/>
        <end position="79"/>
    </location>
</feature>
<feature type="repeat" description="4" evidence="2">
    <location>
        <begin position="115"/>
        <end position="116"/>
    </location>
</feature>
<feature type="repeat" description="5" evidence="2">
    <location>
        <begin position="143"/>
        <end position="144"/>
    </location>
</feature>
<feature type="region of interest" description="5 X 2 AA repeats of F-G" evidence="2">
    <location>
        <begin position="6"/>
        <end position="144"/>
    </location>
</feature>
<feature type="region of interest" description="Disordered" evidence="4">
    <location>
        <begin position="260"/>
        <end position="293"/>
    </location>
</feature>
<feature type="region of interest" description="Required for centrosome localization" evidence="2">
    <location>
        <begin position="331"/>
        <end position="461"/>
    </location>
</feature>
<feature type="coiled-coil region" evidence="3">
    <location>
        <begin position="331"/>
        <end position="461"/>
    </location>
</feature>
<feature type="compositionally biased region" description="Low complexity" evidence="4">
    <location>
        <begin position="269"/>
        <end position="293"/>
    </location>
</feature>
<feature type="modified residue" description="N-acetylserine" evidence="2">
    <location>
        <position position="2"/>
    </location>
</feature>
<feature type="modified residue" description="Phosphoserine" evidence="9">
    <location>
        <position position="411"/>
    </location>
</feature>
<feature type="modified residue" description="Phosphoserine" evidence="2">
    <location>
        <position position="421"/>
    </location>
</feature>
<feature type="glycosylation site" description="O-linked (GlcNAc) serine" evidence="6">
    <location>
        <position position="471"/>
    </location>
</feature>
<feature type="disulfide bond" description="Interchain (with NUP155)" evidence="1">
    <location>
        <position position="478"/>
    </location>
</feature>
<feature type="disulfide bond" description="Interchain (with NUP155)" evidence="1">
    <location>
        <position position="509"/>
    </location>
</feature>
<feature type="sequence conflict" description="In Ref. 4; AAA60741." evidence="8" ref="4">
    <original>NG</original>
    <variation>FR</variation>
    <location>
        <begin position="371"/>
        <end position="372"/>
    </location>
</feature>
<feature type="helix" evidence="11">
    <location>
        <begin position="363"/>
        <end position="403"/>
    </location>
</feature>
<feature type="helix" evidence="10">
    <location>
        <begin position="406"/>
        <end position="410"/>
    </location>
</feature>
<feature type="turn" evidence="10">
    <location>
        <begin position="411"/>
        <end position="416"/>
    </location>
</feature>
<reference key="1">
    <citation type="journal article" date="1990" name="J. Cell Biol.">
        <title>Primary sequence and heterologous expression of nuclear pore glycoprotein p62.</title>
        <authorList>
            <person name="Starr C.M."/>
            <person name="D'Onofrio M."/>
            <person name="Park M.K."/>
            <person name="Hanover J.A."/>
        </authorList>
    </citation>
    <scope>NUCLEOTIDE SEQUENCE [MRNA]</scope>
    <scope>FUNCTION</scope>
    <scope>SUBCELLULAR LOCATION</scope>
    <source>
        <strain>Fischer</strain>
        <tissue>Thyroid</tissue>
    </source>
</reference>
<reference key="2">
    <citation type="journal article" date="1991" name="J. Biol. Chem.">
        <title>The gene encoding rat nuclear pore glycoprotein p62 is intronless.</title>
        <authorList>
            <person name="D'Onofrio M."/>
            <person name="Lee M.D."/>
            <person name="Starr C.M."/>
            <person name="Miller M."/>
            <person name="Hanover J.A."/>
        </authorList>
    </citation>
    <scope>NUCLEOTIDE SEQUENCE [GENOMIC DNA]</scope>
</reference>
<reference key="3">
    <citation type="journal article" date="2004" name="Genome Res.">
        <title>The status, quality, and expansion of the NIH full-length cDNA project: the Mammalian Gene Collection (MGC).</title>
        <authorList>
            <consortium name="The MGC Project Team"/>
        </authorList>
    </citation>
    <scope>NUCLEOTIDE SEQUENCE [LARGE SCALE MRNA]</scope>
    <source>
        <tissue>Brain</tissue>
    </source>
</reference>
<reference key="4">
    <citation type="journal article" date="1988" name="Proc. Natl. Acad. Sci. U.S.A.">
        <title>Partial cDNA sequence encoding a nuclear pore protein modified by O-linked N-acetylglucosamine.</title>
        <authorList>
            <person name="D'Onofrio M."/>
            <person name="Starr C.M."/>
            <person name="Park M.K."/>
            <person name="Holt G.D."/>
            <person name="Haltiwanger R.S."/>
            <person name="Hart G.W."/>
            <person name="Hanover J.A."/>
        </authorList>
    </citation>
    <scope>NUCLEOTIDE SEQUENCE [MRNA] OF 370-525</scope>
    <scope>PARTIAL PROTEIN SEQUENCE</scope>
    <scope>GLYCOSYLATION AT SER-471</scope>
    <source>
        <tissue>Thyroid</tissue>
    </source>
</reference>
<reference key="5">
    <citation type="journal article" date="1996" name="J. Cell Biol.">
        <title>Molecular and functional characterization of the p62 complex, an assembly of nuclear pore complex glycoproteins.</title>
        <authorList>
            <person name="Hu T."/>
            <person name="Guan T."/>
            <person name="Gerace L."/>
        </authorList>
    </citation>
    <scope>FUNCTION</scope>
    <scope>IDENTIFICATION IN A COMPLEX WITH NUP58 AND NUP54</scope>
    <scope>INTERACTION WITH NUTF2</scope>
    <scope>SUBCELLULAR LOCATION</scope>
</reference>
<reference key="6">
    <citation type="journal article" date="2012" name="Nat. Commun.">
        <title>Quantitative maps of protein phosphorylation sites across 14 different rat organs and tissues.</title>
        <authorList>
            <person name="Lundby A."/>
            <person name="Secher A."/>
            <person name="Lage K."/>
            <person name="Nordsborg N.B."/>
            <person name="Dmytriyev A."/>
            <person name="Lundby C."/>
            <person name="Olsen J.V."/>
        </authorList>
    </citation>
    <scope>PHOSPHORYLATION [LARGE SCALE ANALYSIS] AT SER-411</scope>
    <scope>IDENTIFICATION BY MASS SPECTROMETRY [LARGE SCALE ANALYSIS]</scope>
</reference>
<gene>
    <name type="primary">Nup62</name>
</gene>
<accession>P17955</accession>
<accession>A2VCW0</accession>
<dbReference type="EMBL" id="X52583">
    <property type="protein sequence ID" value="CAA36813.1"/>
    <property type="molecule type" value="mRNA"/>
</dbReference>
<dbReference type="EMBL" id="M62992">
    <property type="protein sequence ID" value="AAA41789.1"/>
    <property type="molecule type" value="Genomic_DNA"/>
</dbReference>
<dbReference type="EMBL" id="BC128709">
    <property type="protein sequence ID" value="AAI28710.1"/>
    <property type="molecule type" value="mRNA"/>
</dbReference>
<dbReference type="EMBL" id="J04143">
    <property type="protein sequence ID" value="AAA60741.1"/>
    <property type="molecule type" value="mRNA"/>
</dbReference>
<dbReference type="PIR" id="A35596">
    <property type="entry name" value="A35596"/>
</dbReference>
<dbReference type="RefSeq" id="NP_075586.1">
    <property type="nucleotide sequence ID" value="NM_023098.2"/>
</dbReference>
<dbReference type="RefSeq" id="XP_006229212.1">
    <property type="nucleotide sequence ID" value="XM_006229150.5"/>
</dbReference>
<dbReference type="RefSeq" id="XP_006229213.1">
    <property type="nucleotide sequence ID" value="XM_006229151.5"/>
</dbReference>
<dbReference type="PDB" id="3T97">
    <property type="method" value="X-ray"/>
    <property type="resolution" value="2.80 A"/>
    <property type="chains" value="A/C=362-425"/>
</dbReference>
<dbReference type="PDB" id="5H1X">
    <property type="method" value="X-ray"/>
    <property type="resolution" value="2.41 A"/>
    <property type="chains" value="A/B/C=361-412"/>
</dbReference>
<dbReference type="PDBsum" id="3T97"/>
<dbReference type="PDBsum" id="5H1X"/>
<dbReference type="SMR" id="P17955"/>
<dbReference type="BioGRID" id="249332">
    <property type="interactions" value="4"/>
</dbReference>
<dbReference type="CORUM" id="P17955"/>
<dbReference type="DIP" id="DIP-44925N"/>
<dbReference type="FunCoup" id="P17955">
    <property type="interactions" value="2351"/>
</dbReference>
<dbReference type="IntAct" id="P17955">
    <property type="interactions" value="1"/>
</dbReference>
<dbReference type="STRING" id="10116.ENSRNOP00000067556"/>
<dbReference type="GlyConnect" id="470">
    <property type="glycosylation" value="1 O-GlcNAc glycan"/>
</dbReference>
<dbReference type="GlyCosmos" id="P17955">
    <property type="glycosylation" value="1 site, 1 glycan"/>
</dbReference>
<dbReference type="GlyGen" id="P17955">
    <property type="glycosylation" value="6 sites, 1 O-linked glycan (2 sites)"/>
</dbReference>
<dbReference type="iPTMnet" id="P17955"/>
<dbReference type="PhosphoSitePlus" id="P17955"/>
<dbReference type="jPOST" id="P17955"/>
<dbReference type="PaxDb" id="10116-ENSRNOP00000067556"/>
<dbReference type="Ensembl" id="ENSRNOT00000074847.3">
    <property type="protein sequence ID" value="ENSRNOP00000067556.1"/>
    <property type="gene ID" value="ENSRNOG00000048733.3"/>
</dbReference>
<dbReference type="Ensembl" id="ENSRNOT00000117253.1">
    <property type="protein sequence ID" value="ENSRNOP00000081212.1"/>
    <property type="gene ID" value="ENSRNOG00000048733.3"/>
</dbReference>
<dbReference type="GeneID" id="65274"/>
<dbReference type="KEGG" id="rno:65274"/>
<dbReference type="UCSC" id="RGD:619938">
    <property type="organism name" value="rat"/>
</dbReference>
<dbReference type="AGR" id="RGD:619938"/>
<dbReference type="CTD" id="23636"/>
<dbReference type="RGD" id="619938">
    <property type="gene designation" value="Nup62"/>
</dbReference>
<dbReference type="eggNOG" id="KOG2196">
    <property type="taxonomic scope" value="Eukaryota"/>
</dbReference>
<dbReference type="GeneTree" id="ENSGT00940000161737"/>
<dbReference type="HOGENOM" id="CLU_025936_0_0_1"/>
<dbReference type="InParanoid" id="P17955"/>
<dbReference type="OMA" id="EMMSKQV"/>
<dbReference type="OrthoDB" id="344345at2759"/>
<dbReference type="PhylomeDB" id="P17955"/>
<dbReference type="Reactome" id="R-RNO-159227">
    <property type="pathway name" value="Transport of the SLBP independent Mature mRNA"/>
</dbReference>
<dbReference type="Reactome" id="R-RNO-159230">
    <property type="pathway name" value="Transport of the SLBP Dependant Mature mRNA"/>
</dbReference>
<dbReference type="Reactome" id="R-RNO-159231">
    <property type="pathway name" value="Transport of Mature mRNA Derived from an Intronless Transcript"/>
</dbReference>
<dbReference type="Reactome" id="R-RNO-159236">
    <property type="pathway name" value="Transport of Mature mRNA derived from an Intron-Containing Transcript"/>
</dbReference>
<dbReference type="Reactome" id="R-RNO-170822">
    <property type="pathway name" value="Regulation of Glucokinase by Glucokinase Regulatory Protein"/>
</dbReference>
<dbReference type="Reactome" id="R-RNO-191859">
    <property type="pathway name" value="snRNP Assembly"/>
</dbReference>
<dbReference type="Reactome" id="R-RNO-3108214">
    <property type="pathway name" value="SUMOylation of DNA damage response and repair proteins"/>
</dbReference>
<dbReference type="Reactome" id="R-RNO-3232142">
    <property type="pathway name" value="SUMOylation of ubiquitinylation proteins"/>
</dbReference>
<dbReference type="Reactome" id="R-RNO-3301854">
    <property type="pathway name" value="Nuclear Pore Complex (NPC) Disassembly"/>
</dbReference>
<dbReference type="Reactome" id="R-RNO-3371453">
    <property type="pathway name" value="Regulation of HSF1-mediated heat shock response"/>
</dbReference>
<dbReference type="Reactome" id="R-RNO-4085377">
    <property type="pathway name" value="SUMOylation of SUMOylation proteins"/>
</dbReference>
<dbReference type="Reactome" id="R-RNO-4551638">
    <property type="pathway name" value="SUMOylation of chromatin organization proteins"/>
</dbReference>
<dbReference type="Reactome" id="R-RNO-4570464">
    <property type="pathway name" value="SUMOylation of RNA binding proteins"/>
</dbReference>
<dbReference type="Reactome" id="R-RNO-4615885">
    <property type="pathway name" value="SUMOylation of DNA replication proteins"/>
</dbReference>
<dbReference type="Reactome" id="R-RNO-5578749">
    <property type="pathway name" value="Transcriptional regulation by small RNAs"/>
</dbReference>
<dbReference type="EvolutionaryTrace" id="P17955"/>
<dbReference type="PRO" id="PR:P17955"/>
<dbReference type="Proteomes" id="UP000002494">
    <property type="component" value="Chromosome 1"/>
</dbReference>
<dbReference type="Bgee" id="ENSRNOG00000048733">
    <property type="expression patterns" value="Expressed in testis and 20 other cell types or tissues"/>
</dbReference>
<dbReference type="GO" id="GO:0005642">
    <property type="term" value="C:annulate lamellae"/>
    <property type="evidence" value="ECO:0000314"/>
    <property type="project" value="RGD"/>
</dbReference>
<dbReference type="GO" id="GO:0005813">
    <property type="term" value="C:centrosome"/>
    <property type="evidence" value="ECO:0000266"/>
    <property type="project" value="RGD"/>
</dbReference>
<dbReference type="GO" id="GO:0005737">
    <property type="term" value="C:cytoplasm"/>
    <property type="evidence" value="ECO:0000266"/>
    <property type="project" value="RGD"/>
</dbReference>
<dbReference type="GO" id="GO:0090543">
    <property type="term" value="C:Flemming body"/>
    <property type="evidence" value="ECO:0000266"/>
    <property type="project" value="RGD"/>
</dbReference>
<dbReference type="GO" id="GO:0072686">
    <property type="term" value="C:mitotic spindle"/>
    <property type="evidence" value="ECO:0000266"/>
    <property type="project" value="RGD"/>
</dbReference>
<dbReference type="GO" id="GO:0005635">
    <property type="term" value="C:nuclear envelope"/>
    <property type="evidence" value="ECO:0000266"/>
    <property type="project" value="RGD"/>
</dbReference>
<dbReference type="GO" id="GO:0031965">
    <property type="term" value="C:nuclear membrane"/>
    <property type="evidence" value="ECO:0000314"/>
    <property type="project" value="RGD"/>
</dbReference>
<dbReference type="GO" id="GO:0005643">
    <property type="term" value="C:nuclear pore"/>
    <property type="evidence" value="ECO:0000314"/>
    <property type="project" value="GO_Central"/>
</dbReference>
<dbReference type="GO" id="GO:0044613">
    <property type="term" value="C:nuclear pore central transport channel"/>
    <property type="evidence" value="ECO:0000318"/>
    <property type="project" value="GO_Central"/>
</dbReference>
<dbReference type="GO" id="GO:0032991">
    <property type="term" value="C:protein-containing complex"/>
    <property type="evidence" value="ECO:0000314"/>
    <property type="project" value="RGD"/>
</dbReference>
<dbReference type="GO" id="GO:1990904">
    <property type="term" value="C:ribonucleoprotein complex"/>
    <property type="evidence" value="ECO:0000266"/>
    <property type="project" value="RGD"/>
</dbReference>
<dbReference type="GO" id="GO:0000922">
    <property type="term" value="C:spindle pole"/>
    <property type="evidence" value="ECO:0000266"/>
    <property type="project" value="RGD"/>
</dbReference>
<dbReference type="GO" id="GO:0030544">
    <property type="term" value="F:Hsp70 protein binding"/>
    <property type="evidence" value="ECO:0000266"/>
    <property type="project" value="RGD"/>
</dbReference>
<dbReference type="GO" id="GO:0051879">
    <property type="term" value="F:Hsp90 protein binding"/>
    <property type="evidence" value="ECO:0000266"/>
    <property type="project" value="RGD"/>
</dbReference>
<dbReference type="GO" id="GO:0019894">
    <property type="term" value="F:kinesin binding"/>
    <property type="evidence" value="ECO:0000353"/>
    <property type="project" value="RGD"/>
</dbReference>
<dbReference type="GO" id="GO:0046966">
    <property type="term" value="F:nuclear thyroid hormone receptor binding"/>
    <property type="evidence" value="ECO:0000250"/>
    <property type="project" value="UniProtKB"/>
</dbReference>
<dbReference type="GO" id="GO:0005543">
    <property type="term" value="F:phospholipid binding"/>
    <property type="evidence" value="ECO:0000318"/>
    <property type="project" value="GO_Central"/>
</dbReference>
<dbReference type="GO" id="GO:0044877">
    <property type="term" value="F:protein-containing complex binding"/>
    <property type="evidence" value="ECO:0000353"/>
    <property type="project" value="RGD"/>
</dbReference>
<dbReference type="GO" id="GO:0051425">
    <property type="term" value="F:PTB domain binding"/>
    <property type="evidence" value="ECO:0000266"/>
    <property type="project" value="RGD"/>
</dbReference>
<dbReference type="GO" id="GO:0042169">
    <property type="term" value="F:SH2 domain binding"/>
    <property type="evidence" value="ECO:0000250"/>
    <property type="project" value="UniProtKB"/>
</dbReference>
<dbReference type="GO" id="GO:0030159">
    <property type="term" value="F:signaling receptor complex adaptor activity"/>
    <property type="evidence" value="ECO:0000250"/>
    <property type="project" value="UniProtKB"/>
</dbReference>
<dbReference type="GO" id="GO:0017056">
    <property type="term" value="F:structural constituent of nuclear pore"/>
    <property type="evidence" value="ECO:0000314"/>
    <property type="project" value="GO_Central"/>
</dbReference>
<dbReference type="GO" id="GO:0043130">
    <property type="term" value="F:ubiquitin binding"/>
    <property type="evidence" value="ECO:0000250"/>
    <property type="project" value="UniProtKB"/>
</dbReference>
<dbReference type="GO" id="GO:0007166">
    <property type="term" value="P:cell surface receptor signaling pathway"/>
    <property type="evidence" value="ECO:0000250"/>
    <property type="project" value="UniProtKB"/>
</dbReference>
<dbReference type="GO" id="GO:0090398">
    <property type="term" value="P:cellular senescence"/>
    <property type="evidence" value="ECO:0000266"/>
    <property type="project" value="RGD"/>
</dbReference>
<dbReference type="GO" id="GO:0098534">
    <property type="term" value="P:centriole assembly"/>
    <property type="evidence" value="ECO:0000266"/>
    <property type="project" value="RGD"/>
</dbReference>
<dbReference type="GO" id="GO:0007098">
    <property type="term" value="P:centrosome cycle"/>
    <property type="evidence" value="ECO:0000266"/>
    <property type="project" value="RGD"/>
</dbReference>
<dbReference type="GO" id="GO:0007100">
    <property type="term" value="P:mitotic centrosome separation"/>
    <property type="evidence" value="ECO:0000266"/>
    <property type="project" value="RGD"/>
</dbReference>
<dbReference type="GO" id="GO:0007080">
    <property type="term" value="P:mitotic metaphase chromosome alignment"/>
    <property type="evidence" value="ECO:0000266"/>
    <property type="project" value="RGD"/>
</dbReference>
<dbReference type="GO" id="GO:0051028">
    <property type="term" value="P:mRNA transport"/>
    <property type="evidence" value="ECO:0007669"/>
    <property type="project" value="UniProtKB-KW"/>
</dbReference>
<dbReference type="GO" id="GO:0043066">
    <property type="term" value="P:negative regulation of apoptotic process"/>
    <property type="evidence" value="ECO:0000250"/>
    <property type="project" value="UniProtKB"/>
</dbReference>
<dbReference type="GO" id="GO:0008285">
    <property type="term" value="P:negative regulation of cell population proliferation"/>
    <property type="evidence" value="ECO:0000250"/>
    <property type="project" value="UniProtKB"/>
</dbReference>
<dbReference type="GO" id="GO:0042059">
    <property type="term" value="P:negative regulation of epidermal growth factor receptor signaling pathway"/>
    <property type="evidence" value="ECO:0000266"/>
    <property type="project" value="RGD"/>
</dbReference>
<dbReference type="GO" id="GO:0043069">
    <property type="term" value="P:negative regulation of programmed cell death"/>
    <property type="evidence" value="ECO:0000250"/>
    <property type="project" value="UniProtKB"/>
</dbReference>
<dbReference type="GO" id="GO:0046580">
    <property type="term" value="P:negative regulation of Ras protein signal transduction"/>
    <property type="evidence" value="ECO:0000266"/>
    <property type="project" value="RGD"/>
</dbReference>
<dbReference type="GO" id="GO:0043123">
    <property type="term" value="P:positive regulation of canonical NF-kappaB signal transduction"/>
    <property type="evidence" value="ECO:0000250"/>
    <property type="project" value="UniProtKB"/>
</dbReference>
<dbReference type="GO" id="GO:0046601">
    <property type="term" value="P:positive regulation of centriole replication"/>
    <property type="evidence" value="ECO:0000266"/>
    <property type="project" value="RGD"/>
</dbReference>
<dbReference type="GO" id="GO:0045893">
    <property type="term" value="P:positive regulation of DNA-templated transcription"/>
    <property type="evidence" value="ECO:0000266"/>
    <property type="project" value="RGD"/>
</dbReference>
<dbReference type="GO" id="GO:1903438">
    <property type="term" value="P:positive regulation of mitotic cytokinetic process"/>
    <property type="evidence" value="ECO:0000266"/>
    <property type="project" value="RGD"/>
</dbReference>
<dbReference type="GO" id="GO:0045840">
    <property type="term" value="P:positive regulation of mitotic nuclear division"/>
    <property type="evidence" value="ECO:0000266"/>
    <property type="project" value="RGD"/>
</dbReference>
<dbReference type="GO" id="GO:1904781">
    <property type="term" value="P:positive regulation of protein localization to centrosome"/>
    <property type="evidence" value="ECO:0000266"/>
    <property type="project" value="RGD"/>
</dbReference>
<dbReference type="GO" id="GO:0006606">
    <property type="term" value="P:protein import into nucleus"/>
    <property type="evidence" value="ECO:0000315"/>
    <property type="project" value="RGD"/>
</dbReference>
<dbReference type="GO" id="GO:0060236">
    <property type="term" value="P:regulation of mitotic spindle organization"/>
    <property type="evidence" value="ECO:0000266"/>
    <property type="project" value="RGD"/>
</dbReference>
<dbReference type="GO" id="GO:0042306">
    <property type="term" value="P:regulation of protein import into nucleus"/>
    <property type="evidence" value="ECO:0000314"/>
    <property type="project" value="RGD"/>
</dbReference>
<dbReference type="GO" id="GO:0006405">
    <property type="term" value="P:RNA export from nucleus"/>
    <property type="evidence" value="ECO:0000318"/>
    <property type="project" value="GO_Central"/>
</dbReference>
<dbReference type="GO" id="GO:0007283">
    <property type="term" value="P:spermatogenesis"/>
    <property type="evidence" value="ECO:0000270"/>
    <property type="project" value="RGD"/>
</dbReference>
<dbReference type="FunFam" id="1.20.5.170:FF:000045">
    <property type="entry name" value="nuclear pore glycoprotein p62"/>
    <property type="match status" value="1"/>
</dbReference>
<dbReference type="Gene3D" id="1.20.5.170">
    <property type="match status" value="1"/>
</dbReference>
<dbReference type="InterPro" id="IPR026010">
    <property type="entry name" value="NSP1/NUP62"/>
</dbReference>
<dbReference type="InterPro" id="IPR007758">
    <property type="entry name" value="Nucleoporin_NSP1_C"/>
</dbReference>
<dbReference type="PANTHER" id="PTHR12084:SF14">
    <property type="entry name" value="NUCLEAR PORE GLYCOPROTEIN P62"/>
    <property type="match status" value="1"/>
</dbReference>
<dbReference type="PANTHER" id="PTHR12084">
    <property type="entry name" value="NUCLEAR PORE GLYCOPROTEIN P62-RELATED"/>
    <property type="match status" value="1"/>
</dbReference>
<dbReference type="Pfam" id="PF05064">
    <property type="entry name" value="Nsp1_C"/>
    <property type="match status" value="1"/>
</dbReference>
<name>NUP62_RAT</name>
<evidence type="ECO:0000250" key="1"/>
<evidence type="ECO:0000250" key="2">
    <source>
        <dbReference type="UniProtKB" id="P37198"/>
    </source>
</evidence>
<evidence type="ECO:0000255" key="3"/>
<evidence type="ECO:0000256" key="4">
    <source>
        <dbReference type="SAM" id="MobiDB-lite"/>
    </source>
</evidence>
<evidence type="ECO:0000269" key="5">
    <source>
    </source>
</evidence>
<evidence type="ECO:0000269" key="6">
    <source>
    </source>
</evidence>
<evidence type="ECO:0000269" key="7">
    <source>
    </source>
</evidence>
<evidence type="ECO:0000305" key="8"/>
<evidence type="ECO:0007744" key="9">
    <source>
    </source>
</evidence>
<evidence type="ECO:0007829" key="10">
    <source>
        <dbReference type="PDB" id="3T97"/>
    </source>
</evidence>
<evidence type="ECO:0007829" key="11">
    <source>
        <dbReference type="PDB" id="5H1X"/>
    </source>
</evidence>